<reference key="1">
    <citation type="journal article" date="2005" name="J. Bacteriol.">
        <title>Structure and genome organization of AFV2, a novel archaeal lipothrixvirus with unusual terminal and core structures.</title>
        <authorList>
            <person name="Haring M."/>
            <person name="Vestergaard G."/>
            <person name="Brugger K."/>
            <person name="Rachel R."/>
            <person name="Garrett R.A."/>
            <person name="Prangishvili D."/>
        </authorList>
    </citation>
    <scope>NUCLEOTIDE SEQUENCE [GENOMIC DNA]</scope>
</reference>
<gene>
    <name type="ORF">ORF115</name>
</gene>
<feature type="chain" id="PRO_0000384504" description="Uncharacterized protein ORF115">
    <location>
        <begin position="1"/>
        <end position="115"/>
    </location>
</feature>
<organismHost>
    <name type="scientific">Acidianus sp. F28</name>
    <dbReference type="NCBI Taxonomy" id="315458"/>
</organismHost>
<dbReference type="EMBL" id="AJ854042">
    <property type="protein sequence ID" value="CAH69414.1"/>
    <property type="molecule type" value="Genomic_DNA"/>
</dbReference>
<dbReference type="RefSeq" id="YP_001496952.1">
    <property type="nucleotide sequence ID" value="NC_009884.1"/>
</dbReference>
<dbReference type="KEGG" id="vg:5656057"/>
<dbReference type="Proteomes" id="UP000006364">
    <property type="component" value="Genome"/>
</dbReference>
<sequence length="115" mass="13359">MSVANEVTQLTPTYAPAENASEPTVFSVPIVAFPKAYEYDQQWAVGLIVAGMMKQAKYRRYAYPFVETFVQLKEPYRQYKYRNALKGANAWLTWFNKFEVPALHRLGRMNINKTK</sequence>
<protein>
    <recommendedName>
        <fullName>Uncharacterized protein ORF115</fullName>
    </recommendedName>
</protein>
<keyword id="KW-1185">Reference proteome</keyword>
<name>Y115_AFV2P</name>
<accession>Q573E2</accession>
<organism>
    <name type="scientific">Acidianus filamentous virus 2 (isolate Italy/Pozzuoli)</name>
    <name type="common">AFV-2</name>
    <dbReference type="NCBI Taxonomy" id="654910"/>
    <lineage>
        <taxon>Viruses</taxon>
        <taxon>Adnaviria</taxon>
        <taxon>Zilligvirae</taxon>
        <taxon>Taleaviricota</taxon>
        <taxon>Tokiviricetes</taxon>
        <taxon>Ligamenvirales</taxon>
        <taxon>Lipothrixviridae</taxon>
        <taxon>Deltalipothrixvirus</taxon>
        <taxon>Acidianus filamentous virus 2</taxon>
    </lineage>
</organism>
<proteinExistence type="predicted"/>